<keyword id="KW-0027">Amidation</keyword>
<keyword id="KW-0878">Amphibian defense peptide</keyword>
<keyword id="KW-0044">Antibiotic</keyword>
<keyword id="KW-0929">Antimicrobial</keyword>
<keyword id="KW-0903">Direct protein sequencing</keyword>
<keyword id="KW-1015">Disulfide bond</keyword>
<keyword id="KW-0295">Fungicide</keyword>
<keyword id="KW-0964">Secreted</keyword>
<accession>P82651</accession>
<protein>
    <recommendedName>
        <fullName>Tigerinin-1</fullName>
    </recommendedName>
</protein>
<proteinExistence type="evidence at protein level"/>
<comment type="function">
    <text evidence="1">Antibacterial activity against B.subtilis, E.coli, S.aureus, M.luteus, P.putida and S.cerevisiae.</text>
</comment>
<comment type="subcellular location">
    <subcellularLocation>
        <location>Secreted</location>
    </subcellularLocation>
</comment>
<comment type="tissue specificity">
    <text>Expressed by the skin glands.</text>
</comment>
<comment type="mass spectrometry"/>
<sequence>FCTMIPIPRCY</sequence>
<feature type="peptide" id="PRO_0000043838" description="Tigerinin-1">
    <location>
        <begin position="1"/>
        <end position="11"/>
    </location>
</feature>
<feature type="modified residue" description="Tyrosine amide" evidence="1">
    <location>
        <position position="11"/>
    </location>
</feature>
<feature type="disulfide bond" evidence="1">
    <location>
        <begin position="2"/>
        <end position="10"/>
    </location>
</feature>
<evidence type="ECO:0000269" key="1">
    <source>
    </source>
</evidence>
<name>TIN1_HOPTI</name>
<reference key="1">
    <citation type="journal article" date="2001" name="J. Biol. Chem.">
        <title>Tigerinins: novel antimicrobial peptides from the Indian frog Rana tigerina.</title>
        <authorList>
            <person name="Purna Sai K."/>
            <person name="Jaganadham M.V."/>
            <person name="Vairamani M."/>
            <person name="Raju N.P."/>
            <person name="Devi A.S."/>
            <person name="Nagaraj R."/>
            <person name="Sitaram N."/>
        </authorList>
    </citation>
    <scope>PROTEIN SEQUENCE</scope>
    <scope>FUNCTION</scope>
    <scope>AMIDATION AT TYR-11</scope>
    <scope>MASS SPECTROMETRY</scope>
    <scope>DISULFIDE BONDS</scope>
    <source>
        <tissue>Skin secretion</tissue>
    </source>
</reference>
<dbReference type="GO" id="GO:0005576">
    <property type="term" value="C:extracellular region"/>
    <property type="evidence" value="ECO:0007669"/>
    <property type="project" value="UniProtKB-SubCell"/>
</dbReference>
<dbReference type="GO" id="GO:0042742">
    <property type="term" value="P:defense response to bacterium"/>
    <property type="evidence" value="ECO:0007669"/>
    <property type="project" value="UniProtKB-KW"/>
</dbReference>
<dbReference type="GO" id="GO:0050832">
    <property type="term" value="P:defense response to fungus"/>
    <property type="evidence" value="ECO:0007669"/>
    <property type="project" value="UniProtKB-KW"/>
</dbReference>
<dbReference type="GO" id="GO:0031640">
    <property type="term" value="P:killing of cells of another organism"/>
    <property type="evidence" value="ECO:0007669"/>
    <property type="project" value="UniProtKB-KW"/>
</dbReference>
<organism>
    <name type="scientific">Hoplobatrachus tigerinus</name>
    <name type="common">Indian bull frog</name>
    <name type="synonym">Rana tigerina</name>
    <dbReference type="NCBI Taxonomy" id="103373"/>
    <lineage>
        <taxon>Eukaryota</taxon>
        <taxon>Metazoa</taxon>
        <taxon>Chordata</taxon>
        <taxon>Craniata</taxon>
        <taxon>Vertebrata</taxon>
        <taxon>Euteleostomi</taxon>
        <taxon>Amphibia</taxon>
        <taxon>Batrachia</taxon>
        <taxon>Anura</taxon>
        <taxon>Neobatrachia</taxon>
        <taxon>Ranoidea</taxon>
        <taxon>Dicroglossidae</taxon>
        <taxon>Dicroglossinae</taxon>
        <taxon>Hoplobatrachus</taxon>
    </lineage>
</organism>